<organism>
    <name type="scientific">Synechocystis sp. (strain ATCC 27184 / PCC 6803 / Kazusa)</name>
    <dbReference type="NCBI Taxonomy" id="1111708"/>
    <lineage>
        <taxon>Bacteria</taxon>
        <taxon>Bacillati</taxon>
        <taxon>Cyanobacteriota</taxon>
        <taxon>Cyanophyceae</taxon>
        <taxon>Synechococcales</taxon>
        <taxon>Merismopediaceae</taxon>
        <taxon>Synechocystis</taxon>
    </lineage>
</organism>
<evidence type="ECO:0000255" key="1"/>
<evidence type="ECO:0000305" key="2"/>
<evidence type="ECO:0000305" key="3">
    <source>
    </source>
</evidence>
<name>Y997_SYNY3</name>
<gene>
    <name type="ordered locus">sll0997</name>
</gene>
<reference key="1">
    <citation type="journal article" date="1996" name="DNA Res.">
        <title>Sequence analysis of the genome of the unicellular cyanobacterium Synechocystis sp. strain PCC6803. II. Sequence determination of the entire genome and assignment of potential protein-coding regions.</title>
        <authorList>
            <person name="Kaneko T."/>
            <person name="Sato S."/>
            <person name="Kotani H."/>
            <person name="Tanaka A."/>
            <person name="Asamizu E."/>
            <person name="Nakamura Y."/>
            <person name="Miyajima N."/>
            <person name="Hirosawa M."/>
            <person name="Sugiura M."/>
            <person name="Sasamoto S."/>
            <person name="Kimura T."/>
            <person name="Hosouchi T."/>
            <person name="Matsuno A."/>
            <person name="Muraki A."/>
            <person name="Nakazaki N."/>
            <person name="Naruo K."/>
            <person name="Okumura S."/>
            <person name="Shimpo S."/>
            <person name="Takeuchi C."/>
            <person name="Wada T."/>
            <person name="Watanabe A."/>
            <person name="Yamada M."/>
            <person name="Yasuda M."/>
            <person name="Tabata S."/>
        </authorList>
    </citation>
    <scope>NUCLEOTIDE SEQUENCE [LARGE SCALE GENOMIC DNA]</scope>
    <source>
        <strain>ATCC 27184 / PCC 6803 / Kazusa</strain>
    </source>
</reference>
<reference key="2">
    <citation type="journal article" date="2005" name="Proteomics">
        <title>Proteomic studies of the thylakoid membrane of Synechocystis sp. PCC 6803.</title>
        <authorList>
            <person name="Srivastava R."/>
            <person name="Pisareva T."/>
            <person name="Norling B."/>
        </authorList>
    </citation>
    <scope>SUBCELLULAR LOCATION IN THYLAKOID</scope>
</reference>
<comment type="subcellular location">
    <subcellularLocation>
        <location evidence="3">Cellular thylakoid lumen</location>
    </subcellularLocation>
</comment>
<comment type="sequence caution" evidence="2">
    <conflict type="erroneous initiation">
        <sequence resource="EMBL-CDS" id="BAA17152"/>
    </conflict>
</comment>
<proteinExistence type="inferred from homology"/>
<dbReference type="EMBL" id="BA000022">
    <property type="protein sequence ID" value="BAA17152.1"/>
    <property type="status" value="ALT_INIT"/>
    <property type="molecule type" value="Genomic_DNA"/>
</dbReference>
<dbReference type="PIR" id="S75238">
    <property type="entry name" value="S75238"/>
</dbReference>
<dbReference type="IntAct" id="P73126">
    <property type="interactions" value="2"/>
</dbReference>
<dbReference type="STRING" id="1148.gene:10498014"/>
<dbReference type="PaxDb" id="1148-1652229"/>
<dbReference type="EnsemblBacteria" id="BAA17152">
    <property type="protein sequence ID" value="BAA17152"/>
    <property type="gene ID" value="BAA17152"/>
</dbReference>
<dbReference type="KEGG" id="syn:sll0997"/>
<dbReference type="eggNOG" id="COG2319">
    <property type="taxonomic scope" value="Bacteria"/>
</dbReference>
<dbReference type="InParanoid" id="P73126"/>
<dbReference type="Proteomes" id="UP000001425">
    <property type="component" value="Chromosome"/>
</dbReference>
<dbReference type="GO" id="GO:0031979">
    <property type="term" value="C:plasma membrane-derived thylakoid lumen"/>
    <property type="evidence" value="ECO:0007669"/>
    <property type="project" value="UniProtKB-SubCell"/>
</dbReference>
<accession>P73126</accession>
<protein>
    <recommendedName>
        <fullName>Probable thylakoid lumen protein sll0997</fullName>
    </recommendedName>
</protein>
<sequence>MAPYQSFHIGLLGLALASVWPLSACAITPSFPPAVEQNQQVNGDRQEVQLAQNSDTYTFETFDPNSDEPKLNGKVEKGDVSASISYRQEKHDGYESWFPTVTVKFKNKIVATLEGSESPMPIALLQITDMDRDNPYPAVLFATYTGGAHCCNEVKVFTSNQNGSDWSVRDFGFFNGGPHPAEDLNNDGWDEYVEVDNRFLYLFSSYAGSAAPAQIWALQNGQVVDVSFEPSFQFIHRENAQSMEKDLPEIVAQDSEKNGFLAAYVANKALIGELDEGWQTMLKYYDRESDWGLTNCLEYDDQSNCLNEVKYDSYPDALRAFLVEAGYIEAKFEAENNTL</sequence>
<feature type="signal peptide" evidence="1">
    <location>
        <begin position="1"/>
        <end position="26"/>
    </location>
</feature>
<feature type="chain" id="PRO_0000352751" description="Probable thylakoid lumen protein sll0997">
    <location>
        <begin position="27"/>
        <end position="339"/>
    </location>
</feature>
<keyword id="KW-1185">Reference proteome</keyword>
<keyword id="KW-0732">Signal</keyword>
<keyword id="KW-0793">Thylakoid</keyword>